<evidence type="ECO:0000255" key="1">
    <source>
        <dbReference type="HAMAP-Rule" id="MF_00111"/>
    </source>
</evidence>
<keyword id="KW-0131">Cell cycle</keyword>
<keyword id="KW-0132">Cell division</keyword>
<keyword id="KW-0133">Cell shape</keyword>
<keyword id="KW-0961">Cell wall biogenesis/degradation</keyword>
<keyword id="KW-0963">Cytoplasm</keyword>
<keyword id="KW-0573">Peptidoglycan synthesis</keyword>
<keyword id="KW-0670">Pyruvate</keyword>
<keyword id="KW-1185">Reference proteome</keyword>
<keyword id="KW-0808">Transferase</keyword>
<comment type="function">
    <text evidence="1">Cell wall formation. Adds enolpyruvyl to UDP-N-acetylglucosamine.</text>
</comment>
<comment type="catalytic activity">
    <reaction evidence="1">
        <text>phosphoenolpyruvate + UDP-N-acetyl-alpha-D-glucosamine = UDP-N-acetyl-3-O-(1-carboxyvinyl)-alpha-D-glucosamine + phosphate</text>
        <dbReference type="Rhea" id="RHEA:18681"/>
        <dbReference type="ChEBI" id="CHEBI:43474"/>
        <dbReference type="ChEBI" id="CHEBI:57705"/>
        <dbReference type="ChEBI" id="CHEBI:58702"/>
        <dbReference type="ChEBI" id="CHEBI:68483"/>
        <dbReference type="EC" id="2.5.1.7"/>
    </reaction>
</comment>
<comment type="pathway">
    <text evidence="1">Cell wall biogenesis; peptidoglycan biosynthesis.</text>
</comment>
<comment type="subcellular location">
    <subcellularLocation>
        <location evidence="1">Cytoplasm</location>
    </subcellularLocation>
</comment>
<comment type="similarity">
    <text evidence="1">Belongs to the EPSP synthase family. MurA subfamily.</text>
</comment>
<feature type="chain" id="PRO_0000178913" description="UDP-N-acetylglucosamine 1-carboxyvinyltransferase">
    <location>
        <begin position="1"/>
        <end position="419"/>
    </location>
</feature>
<feature type="active site" description="Proton donor" evidence="1">
    <location>
        <position position="115"/>
    </location>
</feature>
<feature type="binding site" evidence="1">
    <location>
        <begin position="22"/>
        <end position="23"/>
    </location>
    <ligand>
        <name>phosphoenolpyruvate</name>
        <dbReference type="ChEBI" id="CHEBI:58702"/>
    </ligand>
</feature>
<feature type="binding site" evidence="1">
    <location>
        <position position="91"/>
    </location>
    <ligand>
        <name>UDP-N-acetyl-alpha-D-glucosamine</name>
        <dbReference type="ChEBI" id="CHEBI:57705"/>
    </ligand>
</feature>
<feature type="binding site" evidence="1">
    <location>
        <begin position="120"/>
        <end position="124"/>
    </location>
    <ligand>
        <name>UDP-N-acetyl-alpha-D-glucosamine</name>
        <dbReference type="ChEBI" id="CHEBI:57705"/>
    </ligand>
</feature>
<feature type="binding site" evidence="1">
    <location>
        <begin position="160"/>
        <end position="163"/>
    </location>
    <ligand>
        <name>UDP-N-acetyl-alpha-D-glucosamine</name>
        <dbReference type="ChEBI" id="CHEBI:57705"/>
    </ligand>
</feature>
<feature type="binding site" evidence="1">
    <location>
        <position position="305"/>
    </location>
    <ligand>
        <name>UDP-N-acetyl-alpha-D-glucosamine</name>
        <dbReference type="ChEBI" id="CHEBI:57705"/>
    </ligand>
</feature>
<feature type="binding site" evidence="1">
    <location>
        <position position="327"/>
    </location>
    <ligand>
        <name>UDP-N-acetyl-alpha-D-glucosamine</name>
        <dbReference type="ChEBI" id="CHEBI:57705"/>
    </ligand>
</feature>
<feature type="modified residue" description="2-(S-cysteinyl)pyruvic acid O-phosphothioketal" evidence="1">
    <location>
        <position position="115"/>
    </location>
</feature>
<gene>
    <name evidence="1" type="primary">murA</name>
    <name type="synonym">murZ</name>
    <name type="ordered locus">SF3229</name>
    <name type="ordered locus">S3447</name>
</gene>
<accession>P0A751</accession>
<accession>P28909</accession>
<sequence length="419" mass="44818">MDKFRVQGPTKLQGEVTISGAKNAALPILFAALLAEEPVEIQNVPKLKDVDTSMKLLSQLGAKVERNGSVHIDARDVNVFCAPYDLVKTMRASIWALGPLVARFGQGQVSLPGGCTIGARPVDLHISGLEQLGATIKLEEGYVKASVDGRLKGAHIVMDKVSVGATVTIMCAATLAEGTTIIENAAREPEIVDTANFLITLGAKISGQGTDRIVIEGVERLGGGVYRVLPDRIETGTFLVAAAISRGKIICRNAQPDTLDAVLAKLRDAGADIEVGEDWISLDMHGKRPKAVNVRTAPHPAFPTDMQAQFTLLNLVAEGTGFITETVFENRFMHVPELSRMGAHAEIESNTVICHGVEKLSGAQVMATDLRASASLVLAGCIAEGTTVVDRIYHIDRGYERIEDKLRALGANIERVKGE</sequence>
<name>MURA_SHIFL</name>
<proteinExistence type="inferred from homology"/>
<organism>
    <name type="scientific">Shigella flexneri</name>
    <dbReference type="NCBI Taxonomy" id="623"/>
    <lineage>
        <taxon>Bacteria</taxon>
        <taxon>Pseudomonadati</taxon>
        <taxon>Pseudomonadota</taxon>
        <taxon>Gammaproteobacteria</taxon>
        <taxon>Enterobacterales</taxon>
        <taxon>Enterobacteriaceae</taxon>
        <taxon>Shigella</taxon>
    </lineage>
</organism>
<reference key="1">
    <citation type="journal article" date="2002" name="Nucleic Acids Res.">
        <title>Genome sequence of Shigella flexneri 2a: insights into pathogenicity through comparison with genomes of Escherichia coli K12 and O157.</title>
        <authorList>
            <person name="Jin Q."/>
            <person name="Yuan Z."/>
            <person name="Xu J."/>
            <person name="Wang Y."/>
            <person name="Shen Y."/>
            <person name="Lu W."/>
            <person name="Wang J."/>
            <person name="Liu H."/>
            <person name="Yang J."/>
            <person name="Yang F."/>
            <person name="Zhang X."/>
            <person name="Zhang J."/>
            <person name="Yang G."/>
            <person name="Wu H."/>
            <person name="Qu D."/>
            <person name="Dong J."/>
            <person name="Sun L."/>
            <person name="Xue Y."/>
            <person name="Zhao A."/>
            <person name="Gao Y."/>
            <person name="Zhu J."/>
            <person name="Kan B."/>
            <person name="Ding K."/>
            <person name="Chen S."/>
            <person name="Cheng H."/>
            <person name="Yao Z."/>
            <person name="He B."/>
            <person name="Chen R."/>
            <person name="Ma D."/>
            <person name="Qiang B."/>
            <person name="Wen Y."/>
            <person name="Hou Y."/>
            <person name="Yu J."/>
        </authorList>
    </citation>
    <scope>NUCLEOTIDE SEQUENCE [LARGE SCALE GENOMIC DNA]</scope>
    <source>
        <strain>301 / Serotype 2a</strain>
    </source>
</reference>
<reference key="2">
    <citation type="journal article" date="2003" name="Infect. Immun.">
        <title>Complete genome sequence and comparative genomics of Shigella flexneri serotype 2a strain 2457T.</title>
        <authorList>
            <person name="Wei J."/>
            <person name="Goldberg M.B."/>
            <person name="Burland V."/>
            <person name="Venkatesan M.M."/>
            <person name="Deng W."/>
            <person name="Fournier G."/>
            <person name="Mayhew G.F."/>
            <person name="Plunkett G. III"/>
            <person name="Rose D.J."/>
            <person name="Darling A."/>
            <person name="Mau B."/>
            <person name="Perna N.T."/>
            <person name="Payne S.M."/>
            <person name="Runyen-Janecky L.J."/>
            <person name="Zhou S."/>
            <person name="Schwartz D.C."/>
            <person name="Blattner F.R."/>
        </authorList>
    </citation>
    <scope>NUCLEOTIDE SEQUENCE [LARGE SCALE GENOMIC DNA]</scope>
    <source>
        <strain>ATCC 700930 / 2457T / Serotype 2a</strain>
    </source>
</reference>
<dbReference type="EC" id="2.5.1.7" evidence="1"/>
<dbReference type="EMBL" id="AE005674">
    <property type="protein sequence ID" value="AAN44695.1"/>
    <property type="molecule type" value="Genomic_DNA"/>
</dbReference>
<dbReference type="EMBL" id="AE014073">
    <property type="protein sequence ID" value="AAP18509.1"/>
    <property type="molecule type" value="Genomic_DNA"/>
</dbReference>
<dbReference type="RefSeq" id="NP_708988.1">
    <property type="nucleotide sequence ID" value="NC_004337.2"/>
</dbReference>
<dbReference type="RefSeq" id="WP_000357259.1">
    <property type="nucleotide sequence ID" value="NZ_WPGW01000004.1"/>
</dbReference>
<dbReference type="SMR" id="P0A751"/>
<dbReference type="STRING" id="198214.SF3229"/>
<dbReference type="DrugBank" id="DB03397">
    <property type="generic name" value="Uridine-Diphosphate-N-Acetylglucosamine"/>
</dbReference>
<dbReference type="PaxDb" id="198214-SF3229"/>
<dbReference type="GeneID" id="1027112"/>
<dbReference type="GeneID" id="93778792"/>
<dbReference type="KEGG" id="sfl:SF3229"/>
<dbReference type="KEGG" id="sfx:S3447"/>
<dbReference type="PATRIC" id="fig|198214.7.peg.3830"/>
<dbReference type="HOGENOM" id="CLU_027387_0_0_6"/>
<dbReference type="UniPathway" id="UPA00219"/>
<dbReference type="Proteomes" id="UP000001006">
    <property type="component" value="Chromosome"/>
</dbReference>
<dbReference type="Proteomes" id="UP000002673">
    <property type="component" value="Chromosome"/>
</dbReference>
<dbReference type="GO" id="GO:0005737">
    <property type="term" value="C:cytoplasm"/>
    <property type="evidence" value="ECO:0007669"/>
    <property type="project" value="UniProtKB-SubCell"/>
</dbReference>
<dbReference type="GO" id="GO:0008760">
    <property type="term" value="F:UDP-N-acetylglucosamine 1-carboxyvinyltransferase activity"/>
    <property type="evidence" value="ECO:0007669"/>
    <property type="project" value="UniProtKB-UniRule"/>
</dbReference>
<dbReference type="GO" id="GO:0051301">
    <property type="term" value="P:cell division"/>
    <property type="evidence" value="ECO:0007669"/>
    <property type="project" value="UniProtKB-KW"/>
</dbReference>
<dbReference type="GO" id="GO:0071555">
    <property type="term" value="P:cell wall organization"/>
    <property type="evidence" value="ECO:0007669"/>
    <property type="project" value="UniProtKB-KW"/>
</dbReference>
<dbReference type="GO" id="GO:0009252">
    <property type="term" value="P:peptidoglycan biosynthetic process"/>
    <property type="evidence" value="ECO:0007669"/>
    <property type="project" value="UniProtKB-UniRule"/>
</dbReference>
<dbReference type="GO" id="GO:0008360">
    <property type="term" value="P:regulation of cell shape"/>
    <property type="evidence" value="ECO:0007669"/>
    <property type="project" value="UniProtKB-KW"/>
</dbReference>
<dbReference type="GO" id="GO:0019277">
    <property type="term" value="P:UDP-N-acetylgalactosamine biosynthetic process"/>
    <property type="evidence" value="ECO:0007669"/>
    <property type="project" value="InterPro"/>
</dbReference>
<dbReference type="CDD" id="cd01555">
    <property type="entry name" value="UdpNAET"/>
    <property type="match status" value="1"/>
</dbReference>
<dbReference type="FunFam" id="3.65.10.10:FF:000002">
    <property type="entry name" value="UDP-N-acetylglucosamine 1-carboxyvinyltransferase"/>
    <property type="match status" value="1"/>
</dbReference>
<dbReference type="Gene3D" id="3.65.10.10">
    <property type="entry name" value="Enolpyruvate transferase domain"/>
    <property type="match status" value="2"/>
</dbReference>
<dbReference type="HAMAP" id="MF_00111">
    <property type="entry name" value="MurA"/>
    <property type="match status" value="1"/>
</dbReference>
<dbReference type="InterPro" id="IPR001986">
    <property type="entry name" value="Enolpyruvate_Tfrase_dom"/>
</dbReference>
<dbReference type="InterPro" id="IPR036968">
    <property type="entry name" value="Enolpyruvate_Tfrase_sf"/>
</dbReference>
<dbReference type="InterPro" id="IPR050068">
    <property type="entry name" value="MurA_subfamily"/>
</dbReference>
<dbReference type="InterPro" id="IPR013792">
    <property type="entry name" value="RNA3'P_cycl/enolpyr_Trfase_a/b"/>
</dbReference>
<dbReference type="InterPro" id="IPR005750">
    <property type="entry name" value="UDP_GlcNAc_COvinyl_MurA"/>
</dbReference>
<dbReference type="NCBIfam" id="TIGR01072">
    <property type="entry name" value="murA"/>
    <property type="match status" value="1"/>
</dbReference>
<dbReference type="NCBIfam" id="NF006873">
    <property type="entry name" value="PRK09369.1"/>
    <property type="match status" value="1"/>
</dbReference>
<dbReference type="PANTHER" id="PTHR43783">
    <property type="entry name" value="UDP-N-ACETYLGLUCOSAMINE 1-CARBOXYVINYLTRANSFERASE"/>
    <property type="match status" value="1"/>
</dbReference>
<dbReference type="PANTHER" id="PTHR43783:SF1">
    <property type="entry name" value="UDP-N-ACETYLGLUCOSAMINE 1-CARBOXYVINYLTRANSFERASE"/>
    <property type="match status" value="1"/>
</dbReference>
<dbReference type="Pfam" id="PF00275">
    <property type="entry name" value="EPSP_synthase"/>
    <property type="match status" value="1"/>
</dbReference>
<dbReference type="SUPFAM" id="SSF55205">
    <property type="entry name" value="EPT/RTPC-like"/>
    <property type="match status" value="1"/>
</dbReference>
<protein>
    <recommendedName>
        <fullName evidence="1">UDP-N-acetylglucosamine 1-carboxyvinyltransferase</fullName>
        <ecNumber evidence="1">2.5.1.7</ecNumber>
    </recommendedName>
    <alternativeName>
        <fullName evidence="1">Enoylpyruvate transferase</fullName>
    </alternativeName>
    <alternativeName>
        <fullName evidence="1">UDP-N-acetylglucosamine enolpyruvyl transferase</fullName>
        <shortName evidence="1">EPT</shortName>
    </alternativeName>
</protein>